<evidence type="ECO:0000255" key="1">
    <source>
        <dbReference type="HAMAP-Rule" id="MF_00037"/>
    </source>
</evidence>
<proteinExistence type="inferred from homology"/>
<sequence>MPMSRPDSAVSLLPDYSLRAHNTFGFDARARVAARIGSPGQFASLARDPRVAGLDRLVLGGGSNVVFTRDFDGLVLLDEIRGRALVREDDGAWYVEAGGGENWHAFVEWTLAEGMPGLENLALIPGTVGAAPIQNIGAYGLEMKEHFASLRAVELATGELVEFDAARCAFGYRDSFFKRDGRGRFAIVAVTFRLPKAWTPRIGYADVARELAARGIDARAARARDVFDAVVAIRRAKLPDPLALGNAGSFFKNPVIDAQAFAALRAREPDIVSYPQPDGRVKLAAGWLIDRCGWKGRALGAAAVHERQALVLVNLGGASGADVLALAHAIRRDVLGRFGVELEMEPVCL</sequence>
<gene>
    <name evidence="1" type="primary">murB</name>
    <name type="ordered locus">BPSL0868</name>
</gene>
<name>MURB_BURPS</name>
<protein>
    <recommendedName>
        <fullName evidence="1">UDP-N-acetylenolpyruvoylglucosamine reductase</fullName>
        <ecNumber evidence="1">1.3.1.98</ecNumber>
    </recommendedName>
    <alternativeName>
        <fullName evidence="1">UDP-N-acetylmuramate dehydrogenase</fullName>
    </alternativeName>
</protein>
<organism>
    <name type="scientific">Burkholderia pseudomallei (strain K96243)</name>
    <dbReference type="NCBI Taxonomy" id="272560"/>
    <lineage>
        <taxon>Bacteria</taxon>
        <taxon>Pseudomonadati</taxon>
        <taxon>Pseudomonadota</taxon>
        <taxon>Betaproteobacteria</taxon>
        <taxon>Burkholderiales</taxon>
        <taxon>Burkholderiaceae</taxon>
        <taxon>Burkholderia</taxon>
        <taxon>pseudomallei group</taxon>
    </lineage>
</organism>
<comment type="function">
    <text evidence="1">Cell wall formation.</text>
</comment>
<comment type="catalytic activity">
    <reaction evidence="1">
        <text>UDP-N-acetyl-alpha-D-muramate + NADP(+) = UDP-N-acetyl-3-O-(1-carboxyvinyl)-alpha-D-glucosamine + NADPH + H(+)</text>
        <dbReference type="Rhea" id="RHEA:12248"/>
        <dbReference type="ChEBI" id="CHEBI:15378"/>
        <dbReference type="ChEBI" id="CHEBI:57783"/>
        <dbReference type="ChEBI" id="CHEBI:58349"/>
        <dbReference type="ChEBI" id="CHEBI:68483"/>
        <dbReference type="ChEBI" id="CHEBI:70757"/>
        <dbReference type="EC" id="1.3.1.98"/>
    </reaction>
</comment>
<comment type="cofactor">
    <cofactor evidence="1">
        <name>FAD</name>
        <dbReference type="ChEBI" id="CHEBI:57692"/>
    </cofactor>
</comment>
<comment type="pathway">
    <text evidence="1">Cell wall biogenesis; peptidoglycan biosynthesis.</text>
</comment>
<comment type="subcellular location">
    <subcellularLocation>
        <location evidence="1">Cytoplasm</location>
    </subcellularLocation>
</comment>
<comment type="similarity">
    <text evidence="1">Belongs to the MurB family.</text>
</comment>
<accession>Q63WM3</accession>
<reference key="1">
    <citation type="journal article" date="2004" name="Proc. Natl. Acad. Sci. U.S.A.">
        <title>Genomic plasticity of the causative agent of melioidosis, Burkholderia pseudomallei.</title>
        <authorList>
            <person name="Holden M.T.G."/>
            <person name="Titball R.W."/>
            <person name="Peacock S.J."/>
            <person name="Cerdeno-Tarraga A.-M."/>
            <person name="Atkins T."/>
            <person name="Crossman L.C."/>
            <person name="Pitt T."/>
            <person name="Churcher C."/>
            <person name="Mungall K.L."/>
            <person name="Bentley S.D."/>
            <person name="Sebaihia M."/>
            <person name="Thomson N.R."/>
            <person name="Bason N."/>
            <person name="Beacham I.R."/>
            <person name="Brooks K."/>
            <person name="Brown K.A."/>
            <person name="Brown N.F."/>
            <person name="Challis G.L."/>
            <person name="Cherevach I."/>
            <person name="Chillingworth T."/>
            <person name="Cronin A."/>
            <person name="Crossett B."/>
            <person name="Davis P."/>
            <person name="DeShazer D."/>
            <person name="Feltwell T."/>
            <person name="Fraser A."/>
            <person name="Hance Z."/>
            <person name="Hauser H."/>
            <person name="Holroyd S."/>
            <person name="Jagels K."/>
            <person name="Keith K.E."/>
            <person name="Maddison M."/>
            <person name="Moule S."/>
            <person name="Price C."/>
            <person name="Quail M.A."/>
            <person name="Rabbinowitsch E."/>
            <person name="Rutherford K."/>
            <person name="Sanders M."/>
            <person name="Simmonds M."/>
            <person name="Songsivilai S."/>
            <person name="Stevens K."/>
            <person name="Tumapa S."/>
            <person name="Vesaratchavest M."/>
            <person name="Whitehead S."/>
            <person name="Yeats C."/>
            <person name="Barrell B.G."/>
            <person name="Oyston P.C.F."/>
            <person name="Parkhill J."/>
        </authorList>
    </citation>
    <scope>NUCLEOTIDE SEQUENCE [LARGE SCALE GENOMIC DNA]</scope>
    <source>
        <strain>K96243</strain>
    </source>
</reference>
<dbReference type="EC" id="1.3.1.98" evidence="1"/>
<dbReference type="EMBL" id="BX571965">
    <property type="protein sequence ID" value="CAH34860.1"/>
    <property type="molecule type" value="Genomic_DNA"/>
</dbReference>
<dbReference type="RefSeq" id="WP_009919043.1">
    <property type="nucleotide sequence ID" value="NZ_CP009538.1"/>
</dbReference>
<dbReference type="RefSeq" id="YP_107493.1">
    <property type="nucleotide sequence ID" value="NC_006350.1"/>
</dbReference>
<dbReference type="SMR" id="Q63WM3"/>
<dbReference type="STRING" id="272560.BPSL0868"/>
<dbReference type="GeneID" id="93059375"/>
<dbReference type="KEGG" id="bps:BPSL0868"/>
<dbReference type="PATRIC" id="fig|272560.6.peg.937"/>
<dbReference type="eggNOG" id="COG0812">
    <property type="taxonomic scope" value="Bacteria"/>
</dbReference>
<dbReference type="UniPathway" id="UPA00219"/>
<dbReference type="Proteomes" id="UP000000605">
    <property type="component" value="Chromosome 1"/>
</dbReference>
<dbReference type="GO" id="GO:0005829">
    <property type="term" value="C:cytosol"/>
    <property type="evidence" value="ECO:0007669"/>
    <property type="project" value="TreeGrafter"/>
</dbReference>
<dbReference type="GO" id="GO:0071949">
    <property type="term" value="F:FAD binding"/>
    <property type="evidence" value="ECO:0007669"/>
    <property type="project" value="InterPro"/>
</dbReference>
<dbReference type="GO" id="GO:0008762">
    <property type="term" value="F:UDP-N-acetylmuramate dehydrogenase activity"/>
    <property type="evidence" value="ECO:0007669"/>
    <property type="project" value="UniProtKB-UniRule"/>
</dbReference>
<dbReference type="GO" id="GO:0051301">
    <property type="term" value="P:cell division"/>
    <property type="evidence" value="ECO:0007669"/>
    <property type="project" value="UniProtKB-KW"/>
</dbReference>
<dbReference type="GO" id="GO:0071555">
    <property type="term" value="P:cell wall organization"/>
    <property type="evidence" value="ECO:0007669"/>
    <property type="project" value="UniProtKB-KW"/>
</dbReference>
<dbReference type="GO" id="GO:0009252">
    <property type="term" value="P:peptidoglycan biosynthetic process"/>
    <property type="evidence" value="ECO:0007669"/>
    <property type="project" value="UniProtKB-UniRule"/>
</dbReference>
<dbReference type="GO" id="GO:0008360">
    <property type="term" value="P:regulation of cell shape"/>
    <property type="evidence" value="ECO:0007669"/>
    <property type="project" value="UniProtKB-KW"/>
</dbReference>
<dbReference type="Gene3D" id="3.30.465.10">
    <property type="match status" value="1"/>
</dbReference>
<dbReference type="Gene3D" id="3.90.78.10">
    <property type="entry name" value="UDP-N-acetylenolpyruvoylglucosamine reductase, C-terminal domain"/>
    <property type="match status" value="1"/>
</dbReference>
<dbReference type="Gene3D" id="3.30.43.10">
    <property type="entry name" value="Uridine Diphospho-n-acetylenolpyruvylglucosamine Reductase, domain 2"/>
    <property type="match status" value="1"/>
</dbReference>
<dbReference type="HAMAP" id="MF_00037">
    <property type="entry name" value="MurB"/>
    <property type="match status" value="1"/>
</dbReference>
<dbReference type="InterPro" id="IPR016166">
    <property type="entry name" value="FAD-bd_PCMH"/>
</dbReference>
<dbReference type="InterPro" id="IPR036318">
    <property type="entry name" value="FAD-bd_PCMH-like_sf"/>
</dbReference>
<dbReference type="InterPro" id="IPR016167">
    <property type="entry name" value="FAD-bd_PCMH_sub1"/>
</dbReference>
<dbReference type="InterPro" id="IPR016169">
    <property type="entry name" value="FAD-bd_PCMH_sub2"/>
</dbReference>
<dbReference type="InterPro" id="IPR003170">
    <property type="entry name" value="MurB"/>
</dbReference>
<dbReference type="InterPro" id="IPR011601">
    <property type="entry name" value="MurB_C"/>
</dbReference>
<dbReference type="InterPro" id="IPR036635">
    <property type="entry name" value="MurB_C_sf"/>
</dbReference>
<dbReference type="InterPro" id="IPR006094">
    <property type="entry name" value="Oxid_FAD_bind_N"/>
</dbReference>
<dbReference type="NCBIfam" id="TIGR00179">
    <property type="entry name" value="murB"/>
    <property type="match status" value="1"/>
</dbReference>
<dbReference type="NCBIfam" id="NF000755">
    <property type="entry name" value="PRK00046.1"/>
    <property type="match status" value="1"/>
</dbReference>
<dbReference type="PANTHER" id="PTHR21071">
    <property type="entry name" value="UDP-N-ACETYLENOLPYRUVOYLGLUCOSAMINE REDUCTASE"/>
    <property type="match status" value="1"/>
</dbReference>
<dbReference type="PANTHER" id="PTHR21071:SF4">
    <property type="entry name" value="UDP-N-ACETYLENOLPYRUVOYLGLUCOSAMINE REDUCTASE"/>
    <property type="match status" value="1"/>
</dbReference>
<dbReference type="Pfam" id="PF01565">
    <property type="entry name" value="FAD_binding_4"/>
    <property type="match status" value="1"/>
</dbReference>
<dbReference type="Pfam" id="PF02873">
    <property type="entry name" value="MurB_C"/>
    <property type="match status" value="1"/>
</dbReference>
<dbReference type="SUPFAM" id="SSF56176">
    <property type="entry name" value="FAD-binding/transporter-associated domain-like"/>
    <property type="match status" value="1"/>
</dbReference>
<dbReference type="SUPFAM" id="SSF56194">
    <property type="entry name" value="Uridine diphospho-N-Acetylenolpyruvylglucosamine reductase, MurB, C-terminal domain"/>
    <property type="match status" value="1"/>
</dbReference>
<dbReference type="PROSITE" id="PS51387">
    <property type="entry name" value="FAD_PCMH"/>
    <property type="match status" value="1"/>
</dbReference>
<keyword id="KW-0131">Cell cycle</keyword>
<keyword id="KW-0132">Cell division</keyword>
<keyword id="KW-0133">Cell shape</keyword>
<keyword id="KW-0961">Cell wall biogenesis/degradation</keyword>
<keyword id="KW-0963">Cytoplasm</keyword>
<keyword id="KW-0274">FAD</keyword>
<keyword id="KW-0285">Flavoprotein</keyword>
<keyword id="KW-0521">NADP</keyword>
<keyword id="KW-0560">Oxidoreductase</keyword>
<keyword id="KW-0573">Peptidoglycan synthesis</keyword>
<keyword id="KW-1185">Reference proteome</keyword>
<feature type="chain" id="PRO_0000224671" description="UDP-N-acetylenolpyruvoylglucosamine reductase">
    <location>
        <begin position="1"/>
        <end position="349"/>
    </location>
</feature>
<feature type="domain" description="FAD-binding PCMH-type" evidence="1">
    <location>
        <begin position="26"/>
        <end position="197"/>
    </location>
</feature>
<feature type="active site" evidence="1">
    <location>
        <position position="173"/>
    </location>
</feature>
<feature type="active site" description="Proton donor" evidence="1">
    <location>
        <position position="249"/>
    </location>
</feature>
<feature type="active site" evidence="1">
    <location>
        <position position="345"/>
    </location>
</feature>